<accession>B3DYW5</accession>
<name>RL31_METI4</name>
<keyword id="KW-0479">Metal-binding</keyword>
<keyword id="KW-0687">Ribonucleoprotein</keyword>
<keyword id="KW-0689">Ribosomal protein</keyword>
<keyword id="KW-0694">RNA-binding</keyword>
<keyword id="KW-0699">rRNA-binding</keyword>
<keyword id="KW-0862">Zinc</keyword>
<gene>
    <name evidence="1" type="primary">rpmE</name>
    <name type="ordered locus">Minf_0429</name>
</gene>
<feature type="chain" id="PRO_1000126658" description="Large ribosomal subunit protein bL31">
    <location>
        <begin position="1"/>
        <end position="80"/>
    </location>
</feature>
<feature type="binding site" evidence="1">
    <location>
        <position position="16"/>
    </location>
    <ligand>
        <name>Zn(2+)</name>
        <dbReference type="ChEBI" id="CHEBI:29105"/>
    </ligand>
</feature>
<feature type="binding site" evidence="1">
    <location>
        <position position="18"/>
    </location>
    <ligand>
        <name>Zn(2+)</name>
        <dbReference type="ChEBI" id="CHEBI:29105"/>
    </ligand>
</feature>
<feature type="binding site" evidence="1">
    <location>
        <position position="36"/>
    </location>
    <ligand>
        <name>Zn(2+)</name>
        <dbReference type="ChEBI" id="CHEBI:29105"/>
    </ligand>
</feature>
<feature type="binding site" evidence="1">
    <location>
        <position position="39"/>
    </location>
    <ligand>
        <name>Zn(2+)</name>
        <dbReference type="ChEBI" id="CHEBI:29105"/>
    </ligand>
</feature>
<reference key="1">
    <citation type="journal article" date="2008" name="Biol. Direct">
        <title>Complete genome sequence of the extremely acidophilic methanotroph isolate V4, Methylacidiphilum infernorum, a representative of the bacterial phylum Verrucomicrobia.</title>
        <authorList>
            <person name="Hou S."/>
            <person name="Makarova K.S."/>
            <person name="Saw J.H."/>
            <person name="Senin P."/>
            <person name="Ly B.V."/>
            <person name="Zhou Z."/>
            <person name="Ren Y."/>
            <person name="Wang J."/>
            <person name="Galperin M.Y."/>
            <person name="Omelchenko M.V."/>
            <person name="Wolf Y.I."/>
            <person name="Yutin N."/>
            <person name="Koonin E.V."/>
            <person name="Stott M.B."/>
            <person name="Mountain B.W."/>
            <person name="Crowe M.A."/>
            <person name="Smirnova A.V."/>
            <person name="Dunfield P.F."/>
            <person name="Feng L."/>
            <person name="Wang L."/>
            <person name="Alam M."/>
        </authorList>
    </citation>
    <scope>NUCLEOTIDE SEQUENCE [LARGE SCALE GENOMIC DNA]</scope>
    <source>
        <strain>Isolate V4</strain>
    </source>
</reference>
<dbReference type="EMBL" id="CP000975">
    <property type="protein sequence ID" value="ACD82487.1"/>
    <property type="molecule type" value="Genomic_DNA"/>
</dbReference>
<dbReference type="RefSeq" id="WP_012462769.1">
    <property type="nucleotide sequence ID" value="NC_010794.1"/>
</dbReference>
<dbReference type="SMR" id="B3DYW5"/>
<dbReference type="STRING" id="481448.Minf_0429"/>
<dbReference type="KEGG" id="min:Minf_0429"/>
<dbReference type="eggNOG" id="COG0254">
    <property type="taxonomic scope" value="Bacteria"/>
</dbReference>
<dbReference type="HOGENOM" id="CLU_114306_4_2_0"/>
<dbReference type="OrthoDB" id="9803251at2"/>
<dbReference type="Proteomes" id="UP000009149">
    <property type="component" value="Chromosome"/>
</dbReference>
<dbReference type="GO" id="GO:1990904">
    <property type="term" value="C:ribonucleoprotein complex"/>
    <property type="evidence" value="ECO:0007669"/>
    <property type="project" value="UniProtKB-KW"/>
</dbReference>
<dbReference type="GO" id="GO:0005840">
    <property type="term" value="C:ribosome"/>
    <property type="evidence" value="ECO:0007669"/>
    <property type="project" value="UniProtKB-KW"/>
</dbReference>
<dbReference type="GO" id="GO:0046872">
    <property type="term" value="F:metal ion binding"/>
    <property type="evidence" value="ECO:0007669"/>
    <property type="project" value="UniProtKB-KW"/>
</dbReference>
<dbReference type="GO" id="GO:0019843">
    <property type="term" value="F:rRNA binding"/>
    <property type="evidence" value="ECO:0007669"/>
    <property type="project" value="UniProtKB-KW"/>
</dbReference>
<dbReference type="GO" id="GO:0003735">
    <property type="term" value="F:structural constituent of ribosome"/>
    <property type="evidence" value="ECO:0007669"/>
    <property type="project" value="InterPro"/>
</dbReference>
<dbReference type="GO" id="GO:0006412">
    <property type="term" value="P:translation"/>
    <property type="evidence" value="ECO:0007669"/>
    <property type="project" value="UniProtKB-UniRule"/>
</dbReference>
<dbReference type="Gene3D" id="4.10.830.30">
    <property type="entry name" value="Ribosomal protein L31"/>
    <property type="match status" value="1"/>
</dbReference>
<dbReference type="HAMAP" id="MF_00501">
    <property type="entry name" value="Ribosomal_bL31_1"/>
    <property type="match status" value="1"/>
</dbReference>
<dbReference type="InterPro" id="IPR034704">
    <property type="entry name" value="Ribosomal_bL28/bL31-like_sf"/>
</dbReference>
<dbReference type="InterPro" id="IPR002150">
    <property type="entry name" value="Ribosomal_bL31"/>
</dbReference>
<dbReference type="InterPro" id="IPR027491">
    <property type="entry name" value="Ribosomal_bL31_A"/>
</dbReference>
<dbReference type="InterPro" id="IPR042105">
    <property type="entry name" value="Ribosomal_bL31_sf"/>
</dbReference>
<dbReference type="NCBIfam" id="TIGR00105">
    <property type="entry name" value="L31"/>
    <property type="match status" value="1"/>
</dbReference>
<dbReference type="NCBIfam" id="NF000612">
    <property type="entry name" value="PRK00019.1"/>
    <property type="match status" value="1"/>
</dbReference>
<dbReference type="NCBIfam" id="NF001809">
    <property type="entry name" value="PRK00528.1"/>
    <property type="match status" value="1"/>
</dbReference>
<dbReference type="PANTHER" id="PTHR33280">
    <property type="entry name" value="50S RIBOSOMAL PROTEIN L31, CHLOROPLASTIC"/>
    <property type="match status" value="1"/>
</dbReference>
<dbReference type="PANTHER" id="PTHR33280:SF1">
    <property type="entry name" value="LARGE RIBOSOMAL SUBUNIT PROTEIN BL31C"/>
    <property type="match status" value="1"/>
</dbReference>
<dbReference type="Pfam" id="PF01197">
    <property type="entry name" value="Ribosomal_L31"/>
    <property type="match status" value="1"/>
</dbReference>
<dbReference type="PRINTS" id="PR01249">
    <property type="entry name" value="RIBOSOMALL31"/>
</dbReference>
<dbReference type="SUPFAM" id="SSF143800">
    <property type="entry name" value="L28p-like"/>
    <property type="match status" value="1"/>
</dbReference>
<sequence>MKKDIHPNYQETTISCACGAVYTTKSTKPSIRIGICASCHPLFTGQQKFVDTAGRVEKFARRFGKISFIGESSNKKKKTK</sequence>
<comment type="function">
    <text evidence="1">Binds the 23S rRNA.</text>
</comment>
<comment type="cofactor">
    <cofactor evidence="1">
        <name>Zn(2+)</name>
        <dbReference type="ChEBI" id="CHEBI:29105"/>
    </cofactor>
    <text evidence="1">Binds 1 zinc ion per subunit.</text>
</comment>
<comment type="subunit">
    <text evidence="1">Part of the 50S ribosomal subunit.</text>
</comment>
<comment type="similarity">
    <text evidence="1">Belongs to the bacterial ribosomal protein bL31 family. Type A subfamily.</text>
</comment>
<proteinExistence type="inferred from homology"/>
<protein>
    <recommendedName>
        <fullName evidence="1">Large ribosomal subunit protein bL31</fullName>
    </recommendedName>
    <alternativeName>
        <fullName evidence="2">50S ribosomal protein L31</fullName>
    </alternativeName>
</protein>
<evidence type="ECO:0000255" key="1">
    <source>
        <dbReference type="HAMAP-Rule" id="MF_00501"/>
    </source>
</evidence>
<evidence type="ECO:0000305" key="2"/>
<organism>
    <name type="scientific">Methylacidiphilum infernorum (isolate V4)</name>
    <name type="common">Methylokorus infernorum (strain V4)</name>
    <dbReference type="NCBI Taxonomy" id="481448"/>
    <lineage>
        <taxon>Bacteria</taxon>
        <taxon>Pseudomonadati</taxon>
        <taxon>Verrucomicrobiota</taxon>
        <taxon>Methylacidiphilae</taxon>
        <taxon>Methylacidiphilales</taxon>
        <taxon>Methylacidiphilaceae</taxon>
        <taxon>Methylacidiphilum (ex Ratnadevi et al. 2023)</taxon>
    </lineage>
</organism>